<dbReference type="EC" id="2.7.1.17" evidence="4"/>
<dbReference type="EMBL" id="AB025627">
    <property type="protein sequence ID" value="BAA97229.1"/>
    <property type="status" value="ALT_SEQ"/>
    <property type="molecule type" value="Genomic_DNA"/>
</dbReference>
<dbReference type="EMBL" id="CP002688">
    <property type="protein sequence ID" value="AED95841.1"/>
    <property type="molecule type" value="Genomic_DNA"/>
</dbReference>
<dbReference type="EMBL" id="AY050843">
    <property type="protein sequence ID" value="AAK92778.1"/>
    <property type="molecule type" value="mRNA"/>
</dbReference>
<dbReference type="EMBL" id="AY142596">
    <property type="protein sequence ID" value="AAN13165.1"/>
    <property type="molecule type" value="mRNA"/>
</dbReference>
<dbReference type="RefSeq" id="NP_199776.1">
    <property type="nucleotide sequence ID" value="NM_124343.2"/>
</dbReference>
<dbReference type="SMR" id="Q949W8"/>
<dbReference type="FunCoup" id="Q949W8">
    <property type="interactions" value="2854"/>
</dbReference>
<dbReference type="STRING" id="3702.Q949W8"/>
<dbReference type="iPTMnet" id="Q949W8"/>
<dbReference type="PaxDb" id="3702-AT5G49650.1"/>
<dbReference type="ProteomicsDB" id="242467"/>
<dbReference type="DNASU" id="835027"/>
<dbReference type="EnsemblPlants" id="AT5G49650.1">
    <property type="protein sequence ID" value="AT5G49650.1"/>
    <property type="gene ID" value="AT5G49650"/>
</dbReference>
<dbReference type="GeneID" id="835027"/>
<dbReference type="Gramene" id="AT5G49650.1">
    <property type="protein sequence ID" value="AT5G49650.1"/>
    <property type="gene ID" value="AT5G49650"/>
</dbReference>
<dbReference type="KEGG" id="ath:AT5G49650"/>
<dbReference type="Araport" id="AT5G49650"/>
<dbReference type="TAIR" id="AT5G49650">
    <property type="gene designation" value="XK-2"/>
</dbReference>
<dbReference type="eggNOG" id="KOG2531">
    <property type="taxonomic scope" value="Eukaryota"/>
</dbReference>
<dbReference type="HOGENOM" id="CLU_016149_8_0_1"/>
<dbReference type="InParanoid" id="Q949W8"/>
<dbReference type="OMA" id="NSCALGG"/>
<dbReference type="PhylomeDB" id="Q949W8"/>
<dbReference type="BioCyc" id="ARA:AT5G49650-MONOMER"/>
<dbReference type="UniPathway" id="UPA00386"/>
<dbReference type="CD-CODE" id="4299E36E">
    <property type="entry name" value="Nucleolus"/>
</dbReference>
<dbReference type="PRO" id="PR:Q949W8"/>
<dbReference type="Proteomes" id="UP000006548">
    <property type="component" value="Chromosome 5"/>
</dbReference>
<dbReference type="ExpressionAtlas" id="Q949W8">
    <property type="expression patterns" value="baseline and differential"/>
</dbReference>
<dbReference type="GO" id="GO:0005829">
    <property type="term" value="C:cytosol"/>
    <property type="evidence" value="ECO:0000314"/>
    <property type="project" value="TAIR"/>
</dbReference>
<dbReference type="GO" id="GO:0009536">
    <property type="term" value="C:plastid"/>
    <property type="evidence" value="ECO:0007005"/>
    <property type="project" value="TAIR"/>
</dbReference>
<dbReference type="GO" id="GO:0005524">
    <property type="term" value="F:ATP binding"/>
    <property type="evidence" value="ECO:0007669"/>
    <property type="project" value="UniProtKB-KW"/>
</dbReference>
<dbReference type="GO" id="GO:0004856">
    <property type="term" value="F:D-xylulokinase activity"/>
    <property type="evidence" value="ECO:0000314"/>
    <property type="project" value="TAIR"/>
</dbReference>
<dbReference type="GO" id="GO:0016117">
    <property type="term" value="P:carotenoid biosynthetic process"/>
    <property type="evidence" value="ECO:0007669"/>
    <property type="project" value="UniProtKB-UniPathway"/>
</dbReference>
<dbReference type="GO" id="GO:0042732">
    <property type="term" value="P:D-xylose metabolic process"/>
    <property type="evidence" value="ECO:0007669"/>
    <property type="project" value="InterPro"/>
</dbReference>
<dbReference type="GO" id="GO:0005997">
    <property type="term" value="P:xylulose metabolic process"/>
    <property type="evidence" value="ECO:0000315"/>
    <property type="project" value="TAIR"/>
</dbReference>
<dbReference type="CDD" id="cd07776">
    <property type="entry name" value="ASKHA_NBD_FGGY_SpXK-like"/>
    <property type="match status" value="1"/>
</dbReference>
<dbReference type="FunFam" id="3.30.420.40:FF:000118">
    <property type="entry name" value="Xylulose kinase 2"/>
    <property type="match status" value="1"/>
</dbReference>
<dbReference type="Gene3D" id="3.30.420.40">
    <property type="match status" value="2"/>
</dbReference>
<dbReference type="InterPro" id="IPR043129">
    <property type="entry name" value="ATPase_NBD"/>
</dbReference>
<dbReference type="InterPro" id="IPR000577">
    <property type="entry name" value="Carb_kinase_FGGY"/>
</dbReference>
<dbReference type="InterPro" id="IPR042024">
    <property type="entry name" value="D-XK_euk"/>
</dbReference>
<dbReference type="InterPro" id="IPR018485">
    <property type="entry name" value="FGGY_C"/>
</dbReference>
<dbReference type="InterPro" id="IPR018484">
    <property type="entry name" value="FGGY_N"/>
</dbReference>
<dbReference type="PANTHER" id="PTHR10196">
    <property type="entry name" value="SUGAR KINASE"/>
    <property type="match status" value="1"/>
</dbReference>
<dbReference type="PANTHER" id="PTHR10196:SF57">
    <property type="entry name" value="XYLULOSE KINASE"/>
    <property type="match status" value="1"/>
</dbReference>
<dbReference type="Pfam" id="PF02782">
    <property type="entry name" value="FGGY_C"/>
    <property type="match status" value="1"/>
</dbReference>
<dbReference type="Pfam" id="PF00370">
    <property type="entry name" value="FGGY_N"/>
    <property type="match status" value="1"/>
</dbReference>
<dbReference type="PIRSF" id="PIRSF000538">
    <property type="entry name" value="GlpK"/>
    <property type="match status" value="1"/>
</dbReference>
<dbReference type="SUPFAM" id="SSF53067">
    <property type="entry name" value="Actin-like ATPase domain"/>
    <property type="match status" value="2"/>
</dbReference>
<reference key="1">
    <citation type="journal article" date="2000" name="DNA Res.">
        <title>Structural analysis of Arabidopsis thaliana chromosome 5. X. Sequence features of the regions of 3,076,755 bp covered by sixty P1 and TAC clones.</title>
        <authorList>
            <person name="Sato S."/>
            <person name="Nakamura Y."/>
            <person name="Kaneko T."/>
            <person name="Katoh T."/>
            <person name="Asamizu E."/>
            <person name="Kotani H."/>
            <person name="Tabata S."/>
        </authorList>
    </citation>
    <scope>NUCLEOTIDE SEQUENCE [LARGE SCALE GENOMIC DNA]</scope>
    <source>
        <strain>cv. Columbia</strain>
    </source>
</reference>
<reference key="2">
    <citation type="journal article" date="2017" name="Plant J.">
        <title>Araport11: a complete reannotation of the Arabidopsis thaliana reference genome.</title>
        <authorList>
            <person name="Cheng C.Y."/>
            <person name="Krishnakumar V."/>
            <person name="Chan A.P."/>
            <person name="Thibaud-Nissen F."/>
            <person name="Schobel S."/>
            <person name="Town C.D."/>
        </authorList>
    </citation>
    <scope>GENOME REANNOTATION</scope>
    <source>
        <strain>cv. Columbia</strain>
    </source>
</reference>
<reference key="3">
    <citation type="journal article" date="2003" name="Science">
        <title>Empirical analysis of transcriptional activity in the Arabidopsis genome.</title>
        <authorList>
            <person name="Yamada K."/>
            <person name="Lim J."/>
            <person name="Dale J.M."/>
            <person name="Chen H."/>
            <person name="Shinn P."/>
            <person name="Palm C.J."/>
            <person name="Southwick A.M."/>
            <person name="Wu H.C."/>
            <person name="Kim C.J."/>
            <person name="Nguyen M."/>
            <person name="Pham P.K."/>
            <person name="Cheuk R.F."/>
            <person name="Karlin-Newmann G."/>
            <person name="Liu S.X."/>
            <person name="Lam B."/>
            <person name="Sakano H."/>
            <person name="Wu T."/>
            <person name="Yu G."/>
            <person name="Miranda M."/>
            <person name="Quach H.L."/>
            <person name="Tripp M."/>
            <person name="Chang C.H."/>
            <person name="Lee J.M."/>
            <person name="Toriumi M.J."/>
            <person name="Chan M.M."/>
            <person name="Tang C.C."/>
            <person name="Onodera C.S."/>
            <person name="Deng J.M."/>
            <person name="Akiyama K."/>
            <person name="Ansari Y."/>
            <person name="Arakawa T."/>
            <person name="Banh J."/>
            <person name="Banno F."/>
            <person name="Bowser L."/>
            <person name="Brooks S.Y."/>
            <person name="Carninci P."/>
            <person name="Chao Q."/>
            <person name="Choy N."/>
            <person name="Enju A."/>
            <person name="Goldsmith A.D."/>
            <person name="Gurjal M."/>
            <person name="Hansen N.F."/>
            <person name="Hayashizaki Y."/>
            <person name="Johnson-Hopson C."/>
            <person name="Hsuan V.W."/>
            <person name="Iida K."/>
            <person name="Karnes M."/>
            <person name="Khan S."/>
            <person name="Koesema E."/>
            <person name="Ishida J."/>
            <person name="Jiang P.X."/>
            <person name="Jones T."/>
            <person name="Kawai J."/>
            <person name="Kamiya A."/>
            <person name="Meyers C."/>
            <person name="Nakajima M."/>
            <person name="Narusaka M."/>
            <person name="Seki M."/>
            <person name="Sakurai T."/>
            <person name="Satou M."/>
            <person name="Tamse R."/>
            <person name="Vaysberg M."/>
            <person name="Wallender E.K."/>
            <person name="Wong C."/>
            <person name="Yamamura Y."/>
            <person name="Yuan S."/>
            <person name="Shinozaki K."/>
            <person name="Davis R.W."/>
            <person name="Theologis A."/>
            <person name="Ecker J.R."/>
        </authorList>
    </citation>
    <scope>NUCLEOTIDE SEQUENCE [LARGE SCALE MRNA]</scope>
    <source>
        <strain>cv. Columbia</strain>
    </source>
</reference>
<reference key="4">
    <citation type="journal article" date="2006" name="Plant Physiol.">
        <title>A cytosolic Arabidopsis D-xylulose kinase catalyzes the phosphorylation of 1-deoxy-D-xylulose into a precursor of the plastidial isoprenoid pathway.</title>
        <authorList>
            <person name="Hemmerlin A."/>
            <person name="Tritsch D."/>
            <person name="Hartmann M."/>
            <person name="Pacaud K."/>
            <person name="Hoeffler J.F."/>
            <person name="van Dorsselaer A."/>
            <person name="Rohmer M."/>
            <person name="Bach T.J."/>
        </authorList>
    </citation>
    <scope>FUNCTION</scope>
    <scope>DISRUPTION PHENOTYPE</scope>
    <scope>CATALYTIC ACTIVITY</scope>
    <scope>SUBCELLULAR LOCATION</scope>
    <scope>IDENTIFICATION BY MASS SPECTROMETRY</scope>
    <scope>ACTIVITY REGULATION</scope>
    <scope>BIOPHYSICOCHEMICAL PROPERTIES</scope>
    <source>
        <strain>cv. Columbia</strain>
    </source>
</reference>
<evidence type="ECO:0000250" key="1">
    <source>
        <dbReference type="UniProtKB" id="P11553"/>
    </source>
</evidence>
<evidence type="ECO:0000250" key="2">
    <source>
        <dbReference type="UniProtKB" id="Q31KC7"/>
    </source>
</evidence>
<evidence type="ECO:0000250" key="3">
    <source>
        <dbReference type="UniProtKB" id="Q8L794"/>
    </source>
</evidence>
<evidence type="ECO:0000269" key="4">
    <source>
    </source>
</evidence>
<evidence type="ECO:0000303" key="5">
    <source>
    </source>
</evidence>
<evidence type="ECO:0000305" key="6"/>
<evidence type="ECO:0000305" key="7">
    <source>
    </source>
</evidence>
<evidence type="ECO:0000312" key="8">
    <source>
        <dbReference type="Araport" id="AT5G49650"/>
    </source>
</evidence>
<evidence type="ECO:0000312" key="9">
    <source>
        <dbReference type="EMBL" id="BAA97229.1"/>
    </source>
</evidence>
<name>XK2_ARATH</name>
<protein>
    <recommendedName>
        <fullName evidence="5">Xylulose kinase 2</fullName>
        <shortName evidence="5">Atxk-2</shortName>
        <shortName evidence="6">Xylulokinase 2</shortName>
        <ecNumber evidence="4">2.7.1.17</ecNumber>
    </recommendedName>
    <alternativeName>
        <fullName evidence="5">1-Deoxy-D-Xylulokinase</fullName>
        <shortName evidence="5">DXK</shortName>
    </alternativeName>
</protein>
<gene>
    <name evidence="5" type="primary">XK2</name>
    <name evidence="5" type="synonym">XK-2</name>
    <name evidence="8" type="ordered locus">At5g49650</name>
    <name evidence="9" type="ORF">MNI5.3</name>
</gene>
<sequence length="558" mass="61295">MADLSLPPDSLFLGFDSSTQSMKATVLDSNLNIIKTELVHFDSDLPQYKTKDGVYRDTTVNGRIVSPTLMWVEAFDLILQKLSNANFDFAKVIAVSGSGQQHGSVYWSKGSSEVLRSLDSKRSLKEQLENAFSVKESPIWMDSSTTLQCKEIENAVGGAMELSKITGSRAYERFTGPQIRKLFMTQGEVYKSTERISLVSSFMASLLVGDYACIDETDAAGMNLMDIEKRCWSKAALEATATGLEEKLGKLAPAYATAGSISQYFVQRFGFEKNCVVVQWSGDNPNSLAGLTLSTPGDLAISLGTSDTVFGITKELQPSLEGHVLPNPVDPESYMVMLVYKNASLTREEIRDRCAEGSWDVFNKYLQQTQPLNNGKLGFYYTENEILPPLPVGSHRYILENFSGESLEGVKEQEVGEFDPPSEVRALIEGQFLSKRAHTERFGMPSPPLRIIATGGASANENILSLISAIFGCDVYTVQRPDSASLGAALRAAHGWLCNKKGSFVPISNLYEGKLETTSLNCKLKVKAGDANIASTYGLLMKKRMEIENKLVEKLGHF</sequence>
<accession>Q949W8</accession>
<accession>Q9LT51</accession>
<proteinExistence type="evidence at protein level"/>
<feature type="chain" id="PRO_0000443300" description="Xylulose kinase 2">
    <location>
        <begin position="1"/>
        <end position="558"/>
    </location>
</feature>
<feature type="binding site" evidence="2">
    <location>
        <position position="16"/>
    </location>
    <ligand>
        <name>substrate</name>
    </ligand>
</feature>
<feature type="binding site" evidence="2">
    <location>
        <begin position="20"/>
        <end position="23"/>
    </location>
    <ligand>
        <name>substrate</name>
    </ligand>
</feature>
<feature type="binding site" evidence="2">
    <location>
        <position position="111"/>
    </location>
    <ligand>
        <name>substrate</name>
    </ligand>
</feature>
<feature type="binding site" evidence="2">
    <location>
        <position position="283"/>
    </location>
    <ligand>
        <name>substrate</name>
    </ligand>
</feature>
<feature type="binding site" evidence="3">
    <location>
        <position position="305"/>
    </location>
    <ligand>
        <name>ATP</name>
        <dbReference type="ChEBI" id="CHEBI:30616"/>
    </ligand>
</feature>
<feature type="binding site" evidence="3">
    <location>
        <begin position="456"/>
        <end position="460"/>
    </location>
    <ligand>
        <name>ATP</name>
        <dbReference type="ChEBI" id="CHEBI:30616"/>
    </ligand>
</feature>
<comment type="function">
    <text evidence="4">Mediates 1-deoxy-D-xylulose (DX) phosphorylation in the cytoplasm prior to the translocation of 1-deoxy-D-xylulose 5-phosphate into plastids. Can also phosphorylate D-xylulose (Xyl). Uses preferentially ATP as cosubstrate.</text>
</comment>
<comment type="catalytic activity">
    <reaction evidence="4">
        <text>D-xylulose + ATP = D-xylulose 5-phosphate + ADP + H(+)</text>
        <dbReference type="Rhea" id="RHEA:10964"/>
        <dbReference type="ChEBI" id="CHEBI:15378"/>
        <dbReference type="ChEBI" id="CHEBI:17140"/>
        <dbReference type="ChEBI" id="CHEBI:30616"/>
        <dbReference type="ChEBI" id="CHEBI:57737"/>
        <dbReference type="ChEBI" id="CHEBI:456216"/>
        <dbReference type="EC" id="2.7.1.17"/>
    </reaction>
</comment>
<comment type="cofactor">
    <cofactor evidence="1">
        <name>a divalent metal cation</name>
        <dbReference type="ChEBI" id="CHEBI:60240"/>
    </cofactor>
</comment>
<comment type="activity regulation">
    <text evidence="4">Repressed by oxo-clomazone (keto-clomazone), a bleaching herbicide.</text>
</comment>
<comment type="biophysicochemical properties">
    <kinetics>
        <KM evidence="4">0.07 mM for D-xylulose (at pH 8)</KM>
        <KM evidence="4">4 mM for 1-deoxy-D-xylulose (at pH 8)</KM>
        <Vmax evidence="4">357.0 mmol/min/mg enzyme with D-xylulose (at pH 8)</Vmax>
        <Vmax evidence="4">120.0 mmol/min/mg enzyme with 1-deoxy-D-xylulose as substrate (at pH 8)</Vmax>
    </kinetics>
    <temperatureDependence>
        <text evidence="4">Optimum temperature is 40 degrees Celsius (at pH 8). Active from 10 to 50 degrees Celsius.</text>
    </temperatureDependence>
</comment>
<comment type="pathway">
    <text evidence="7">Isoprenoid biosynthesis; carotenoid biosynthesis.</text>
</comment>
<comment type="subcellular location">
    <subcellularLocation>
        <location evidence="4">Cytoplasm</location>
    </subcellularLocation>
</comment>
<comment type="disruption phenotype">
    <text evidence="4">Impaired xylulose kinase activity in cytoplasm. Hypersensitivity to D-xylulose (Xyl) leading to reduced seeds germination. Loss of remediation of photosynthetic pigments after oxo-clomazone-mediated bleaching, thus leading to albino plants.</text>
</comment>
<comment type="similarity">
    <text evidence="6">Belongs to the FGGY kinase family.</text>
</comment>
<comment type="sequence caution" evidence="6">
    <conflict type="erroneous gene model prediction">
        <sequence resource="EMBL-CDS" id="BAA97229"/>
    </conflict>
</comment>
<keyword id="KW-0067">ATP-binding</keyword>
<keyword id="KW-0963">Cytoplasm</keyword>
<keyword id="KW-0418">Kinase</keyword>
<keyword id="KW-0547">Nucleotide-binding</keyword>
<keyword id="KW-1185">Reference proteome</keyword>
<keyword id="KW-0808">Transferase</keyword>
<organism>
    <name type="scientific">Arabidopsis thaliana</name>
    <name type="common">Mouse-ear cress</name>
    <dbReference type="NCBI Taxonomy" id="3702"/>
    <lineage>
        <taxon>Eukaryota</taxon>
        <taxon>Viridiplantae</taxon>
        <taxon>Streptophyta</taxon>
        <taxon>Embryophyta</taxon>
        <taxon>Tracheophyta</taxon>
        <taxon>Spermatophyta</taxon>
        <taxon>Magnoliopsida</taxon>
        <taxon>eudicotyledons</taxon>
        <taxon>Gunneridae</taxon>
        <taxon>Pentapetalae</taxon>
        <taxon>rosids</taxon>
        <taxon>malvids</taxon>
        <taxon>Brassicales</taxon>
        <taxon>Brassicaceae</taxon>
        <taxon>Camelineae</taxon>
        <taxon>Arabidopsis</taxon>
    </lineage>
</organism>